<keyword id="KW-0032">Aminotransferase</keyword>
<keyword id="KW-0663">Pyridoxal phosphate</keyword>
<keyword id="KW-0808">Transferase</keyword>
<feature type="chain" id="PRO_1000215348" description="Aromatic amino acid aminotransferase">
    <location>
        <begin position="1"/>
        <end position="358"/>
    </location>
</feature>
<feature type="modified residue" description="N6-(pyridoxal phosphate)lysine" evidence="1">
    <location>
        <position position="214"/>
    </location>
</feature>
<gene>
    <name evidence="1" type="primary">pat</name>
    <name type="ordered locus">RER_03130</name>
</gene>
<proteinExistence type="inferred from homology"/>
<name>PATR_RHOE4</name>
<dbReference type="EC" id="2.6.1.57" evidence="1"/>
<dbReference type="EMBL" id="AP008957">
    <property type="protein sequence ID" value="BAH31021.1"/>
    <property type="molecule type" value="Genomic_DNA"/>
</dbReference>
<dbReference type="SMR" id="C0ZM44"/>
<dbReference type="KEGG" id="rer:RER_03130"/>
<dbReference type="PATRIC" id="fig|234621.6.peg.748"/>
<dbReference type="eggNOG" id="COG0079">
    <property type="taxonomic scope" value="Bacteria"/>
</dbReference>
<dbReference type="HOGENOM" id="CLU_017584_3_3_11"/>
<dbReference type="Proteomes" id="UP000002204">
    <property type="component" value="Chromosome"/>
</dbReference>
<dbReference type="GO" id="GO:0008793">
    <property type="term" value="F:aromatic-amino-acid transaminase activity"/>
    <property type="evidence" value="ECO:0007669"/>
    <property type="project" value="UniProtKB-UniRule"/>
</dbReference>
<dbReference type="GO" id="GO:0004400">
    <property type="term" value="F:histidinol-phosphate transaminase activity"/>
    <property type="evidence" value="ECO:0007669"/>
    <property type="project" value="InterPro"/>
</dbReference>
<dbReference type="GO" id="GO:0030170">
    <property type="term" value="F:pyridoxal phosphate binding"/>
    <property type="evidence" value="ECO:0007669"/>
    <property type="project" value="UniProtKB-UniRule"/>
</dbReference>
<dbReference type="GO" id="GO:0000105">
    <property type="term" value="P:L-histidine biosynthetic process"/>
    <property type="evidence" value="ECO:0007669"/>
    <property type="project" value="InterPro"/>
</dbReference>
<dbReference type="CDD" id="cd00609">
    <property type="entry name" value="AAT_like"/>
    <property type="match status" value="1"/>
</dbReference>
<dbReference type="Gene3D" id="3.90.1150.10">
    <property type="entry name" value="Aspartate Aminotransferase, domain 1"/>
    <property type="match status" value="1"/>
</dbReference>
<dbReference type="Gene3D" id="3.40.640.10">
    <property type="entry name" value="Type I PLP-dependent aspartate aminotransferase-like (Major domain)"/>
    <property type="match status" value="1"/>
</dbReference>
<dbReference type="HAMAP" id="MF_01023">
    <property type="entry name" value="HisC_aminotrans_2"/>
    <property type="match status" value="1"/>
</dbReference>
<dbReference type="HAMAP" id="MF_01513">
    <property type="entry name" value="Phe_aminotrans_2"/>
    <property type="match status" value="1"/>
</dbReference>
<dbReference type="InterPro" id="IPR001917">
    <property type="entry name" value="Aminotrans_II_pyridoxalP_BS"/>
</dbReference>
<dbReference type="InterPro" id="IPR004839">
    <property type="entry name" value="Aminotransferase_I/II_large"/>
</dbReference>
<dbReference type="InterPro" id="IPR024892">
    <property type="entry name" value="ArAT"/>
</dbReference>
<dbReference type="InterPro" id="IPR005861">
    <property type="entry name" value="HisP_aminotrans"/>
</dbReference>
<dbReference type="InterPro" id="IPR050106">
    <property type="entry name" value="HistidinolP_aminotransfase"/>
</dbReference>
<dbReference type="InterPro" id="IPR015424">
    <property type="entry name" value="PyrdxlP-dep_Trfase"/>
</dbReference>
<dbReference type="InterPro" id="IPR015421">
    <property type="entry name" value="PyrdxlP-dep_Trfase_major"/>
</dbReference>
<dbReference type="InterPro" id="IPR015422">
    <property type="entry name" value="PyrdxlP-dep_Trfase_small"/>
</dbReference>
<dbReference type="NCBIfam" id="TIGR01141">
    <property type="entry name" value="hisC"/>
    <property type="match status" value="1"/>
</dbReference>
<dbReference type="NCBIfam" id="NF002878">
    <property type="entry name" value="PRK03321.1"/>
    <property type="match status" value="1"/>
</dbReference>
<dbReference type="PANTHER" id="PTHR43643:SF3">
    <property type="entry name" value="HISTIDINOL-PHOSPHATE AMINOTRANSFERASE"/>
    <property type="match status" value="1"/>
</dbReference>
<dbReference type="PANTHER" id="PTHR43643">
    <property type="entry name" value="HISTIDINOL-PHOSPHATE AMINOTRANSFERASE 2"/>
    <property type="match status" value="1"/>
</dbReference>
<dbReference type="Pfam" id="PF00155">
    <property type="entry name" value="Aminotran_1_2"/>
    <property type="match status" value="1"/>
</dbReference>
<dbReference type="SUPFAM" id="SSF53383">
    <property type="entry name" value="PLP-dependent transferases"/>
    <property type="match status" value="1"/>
</dbReference>
<dbReference type="PROSITE" id="PS00599">
    <property type="entry name" value="AA_TRANSFER_CLASS_2"/>
    <property type="match status" value="1"/>
</dbReference>
<protein>
    <recommendedName>
        <fullName evidence="1">Aromatic amino acid aminotransferase</fullName>
        <shortName evidence="1">ArAT</shortName>
        <ecNumber evidence="1">2.6.1.57</ecNumber>
    </recommendedName>
</protein>
<sequence>MTAHIRPDLASIPAYVPGRNFPGAIKLASNETTVGPLPGVRDAVADAVANANRYPDNAAVALIEALASFLKVEPANVAAGCGSVTLCQELVQITCDQGDEVIYAWRSFEAYPVVTQVGHAVSVKVPLTEDFGHDLDAMLAAITDRTRLIFVCNPNNPTGNALSKAELESFLDAVPAHVVVALDEAYFEYSRSDADGIELFRSRPNVVVLRTFSKAYGLAGIRVGYAVADPEIIVALGKVHTPFTVSAVAQAAAIASLAAADELLARTEGVIAERTRVRTALIEAGYTVPESSANFVYLPLGELSPAFAEASTEAGILIRQYGVEGVRMTIGDPHENDAFLAFADTDVAKQAAGIGVSA</sequence>
<reference key="1">
    <citation type="submission" date="2005-03" db="EMBL/GenBank/DDBJ databases">
        <title>Comparison of the complete genome sequences of Rhodococcus erythropolis PR4 and Rhodococcus opacus B4.</title>
        <authorList>
            <person name="Takarada H."/>
            <person name="Sekine M."/>
            <person name="Hosoyama A."/>
            <person name="Yamada R."/>
            <person name="Fujisawa T."/>
            <person name="Omata S."/>
            <person name="Shimizu A."/>
            <person name="Tsukatani N."/>
            <person name="Tanikawa S."/>
            <person name="Fujita N."/>
            <person name="Harayama S."/>
        </authorList>
    </citation>
    <scope>NUCLEOTIDE SEQUENCE [LARGE SCALE GENOMIC DNA]</scope>
    <source>
        <strain>PR4 / NBRC 100887</strain>
    </source>
</reference>
<evidence type="ECO:0000255" key="1">
    <source>
        <dbReference type="HAMAP-Rule" id="MF_01513"/>
    </source>
</evidence>
<accession>C0ZM44</accession>
<organism>
    <name type="scientific">Rhodococcus erythropolis (strain PR4 / NBRC 100887)</name>
    <dbReference type="NCBI Taxonomy" id="234621"/>
    <lineage>
        <taxon>Bacteria</taxon>
        <taxon>Bacillati</taxon>
        <taxon>Actinomycetota</taxon>
        <taxon>Actinomycetes</taxon>
        <taxon>Mycobacteriales</taxon>
        <taxon>Nocardiaceae</taxon>
        <taxon>Rhodococcus</taxon>
        <taxon>Rhodococcus erythropolis group</taxon>
    </lineage>
</organism>
<comment type="function">
    <text evidence="1">Aminotransferase that catalyzes the conversion of aromatic amino acids and 2-oxoglutarate into corresponding aromatic oxo acids and L-glutamate.</text>
</comment>
<comment type="catalytic activity">
    <reaction evidence="1">
        <text>an aromatic L-alpha-amino acid + 2-oxoglutarate = an aromatic oxo-acid + L-glutamate</text>
        <dbReference type="Rhea" id="RHEA:17533"/>
        <dbReference type="ChEBI" id="CHEBI:16810"/>
        <dbReference type="ChEBI" id="CHEBI:29985"/>
        <dbReference type="ChEBI" id="CHEBI:73309"/>
        <dbReference type="ChEBI" id="CHEBI:84824"/>
        <dbReference type="EC" id="2.6.1.57"/>
    </reaction>
</comment>
<comment type="cofactor">
    <cofactor evidence="1">
        <name>pyridoxal 5'-phosphate</name>
        <dbReference type="ChEBI" id="CHEBI:597326"/>
    </cofactor>
</comment>
<comment type="subunit">
    <text evidence="1">Homodimer.</text>
</comment>
<comment type="similarity">
    <text evidence="1">Belongs to the class-II pyridoxal-phosphate-dependent aminotransferase family.</text>
</comment>